<sequence>MMRTLITTHPLPLLLLPQQLLQPVQFQEVDTDFDFPEEDKKEDFEEYLEQFFSTGPTRPPTKEKVKRRVLIESGMPLNHIEYCTHEIMGKNVYYKHRCVAERYFLLMQYDELQKICYNRFVPCKNGIRKCNRSKGLVEGVYCNLTEAFEIPACKYESLYRKGYVLITCSWQNEMQKRIPHTINDLVEPPEHRSFLSEDGVFVIPP</sequence>
<organism>
    <name type="scientific">Pan troglodytes</name>
    <name type="common">Chimpanzee</name>
    <dbReference type="NCBI Taxonomy" id="9598"/>
    <lineage>
        <taxon>Eukaryota</taxon>
        <taxon>Metazoa</taxon>
        <taxon>Chordata</taxon>
        <taxon>Craniata</taxon>
        <taxon>Vertebrata</taxon>
        <taxon>Euteleostomi</taxon>
        <taxon>Mammalia</taxon>
        <taxon>Eutheria</taxon>
        <taxon>Euarchontoglires</taxon>
        <taxon>Primates</taxon>
        <taxon>Haplorrhini</taxon>
        <taxon>Catarrhini</taxon>
        <taxon>Hominidae</taxon>
        <taxon>Pan</taxon>
    </lineage>
</organism>
<dbReference type="EMBL" id="AY263969">
    <property type="protein sequence ID" value="AAP21768.1"/>
    <property type="molecule type" value="Genomic_DNA"/>
</dbReference>
<dbReference type="RefSeq" id="NP_001009131.1">
    <property type="nucleotide sequence ID" value="NM_001009131.1"/>
</dbReference>
<dbReference type="SMR" id="Q863K1"/>
<dbReference type="FunCoup" id="Q863K1">
    <property type="interactions" value="6"/>
</dbReference>
<dbReference type="GlyCosmos" id="Q863K1">
    <property type="glycosylation" value="2 sites, No reported glycans"/>
</dbReference>
<dbReference type="PaxDb" id="9598-ENSPTRP00000010349"/>
<dbReference type="GeneID" id="473322"/>
<dbReference type="KEGG" id="ptr:473322"/>
<dbReference type="CTD" id="390443"/>
<dbReference type="eggNOG" id="ENOG502TDU6">
    <property type="taxonomic scope" value="Eukaryota"/>
</dbReference>
<dbReference type="InParanoid" id="Q863K1"/>
<dbReference type="Proteomes" id="UP000002277">
    <property type="component" value="Unplaced"/>
</dbReference>
<dbReference type="GO" id="GO:0005576">
    <property type="term" value="C:extracellular region"/>
    <property type="evidence" value="ECO:0007669"/>
    <property type="project" value="UniProtKB-SubCell"/>
</dbReference>
<dbReference type="GO" id="GO:0003676">
    <property type="term" value="F:nucleic acid binding"/>
    <property type="evidence" value="ECO:0007669"/>
    <property type="project" value="InterPro"/>
</dbReference>
<dbReference type="GO" id="GO:0050830">
    <property type="term" value="P:defense response to Gram-positive bacterium"/>
    <property type="evidence" value="ECO:0000318"/>
    <property type="project" value="GO_Central"/>
</dbReference>
<dbReference type="CDD" id="cd00163">
    <property type="entry name" value="RNase_A"/>
    <property type="match status" value="1"/>
</dbReference>
<dbReference type="FunFam" id="3.10.130.10:FF:000003">
    <property type="entry name" value="Inactive ribonuclease-like protein 9"/>
    <property type="match status" value="1"/>
</dbReference>
<dbReference type="Gene3D" id="3.10.130.10">
    <property type="entry name" value="Ribonuclease A-like domain"/>
    <property type="match status" value="1"/>
</dbReference>
<dbReference type="InterPro" id="IPR001427">
    <property type="entry name" value="RNaseA"/>
</dbReference>
<dbReference type="InterPro" id="IPR036816">
    <property type="entry name" value="RNaseA-like_dom_sf"/>
</dbReference>
<dbReference type="InterPro" id="IPR023412">
    <property type="entry name" value="RNaseA_domain"/>
</dbReference>
<dbReference type="PANTHER" id="PTHR11437:SF14">
    <property type="entry name" value="INACTIVE RIBONUCLEASE-LIKE PROTEIN 9"/>
    <property type="match status" value="1"/>
</dbReference>
<dbReference type="PANTHER" id="PTHR11437">
    <property type="entry name" value="RIBONUCLEASE"/>
    <property type="match status" value="1"/>
</dbReference>
<dbReference type="Pfam" id="PF00074">
    <property type="entry name" value="RnaseA"/>
    <property type="match status" value="1"/>
</dbReference>
<dbReference type="SMART" id="SM00092">
    <property type="entry name" value="RNAse_Pc"/>
    <property type="match status" value="1"/>
</dbReference>
<dbReference type="SUPFAM" id="SSF54076">
    <property type="entry name" value="RNase A-like"/>
    <property type="match status" value="1"/>
</dbReference>
<reference key="1">
    <citation type="submission" date="2003-03" db="EMBL/GenBank/DDBJ databases">
        <title>LOC122650 on chromosome 14p11.1 is related to the RNase A superfamily and is uniquely expressed in lung.</title>
        <authorList>
            <person name="Devor E.J."/>
            <person name="Moffat-Wilson K.A."/>
        </authorList>
    </citation>
    <scope>NUCLEOTIDE SEQUENCE [GENOMIC DNA]</scope>
</reference>
<protein>
    <recommendedName>
        <fullName>Inactive ribonuclease-like protein 9</fullName>
    </recommendedName>
</protein>
<gene>
    <name type="primary">RNASE9</name>
</gene>
<evidence type="ECO:0000250" key="1"/>
<evidence type="ECO:0000255" key="2"/>
<evidence type="ECO:0000305" key="3"/>
<comment type="function">
    <text evidence="1">Does not exhibit any ribonuclease activity.</text>
</comment>
<comment type="subcellular location">
    <subcellularLocation>
        <location evidence="3">Secreted</location>
    </subcellularLocation>
</comment>
<comment type="similarity">
    <text evidence="3">Belongs to the pancreatic ribonuclease family.</text>
</comment>
<feature type="signal peptide" evidence="2">
    <location>
        <begin position="1"/>
        <end position="26"/>
    </location>
</feature>
<feature type="chain" id="PRO_0000030957" description="Inactive ribonuclease-like protein 9">
    <location>
        <begin position="27"/>
        <end position="205"/>
    </location>
</feature>
<feature type="glycosylation site" description="N-linked (GlcNAc...) asparagine" evidence="2">
    <location>
        <position position="131"/>
    </location>
</feature>
<feature type="glycosylation site" description="N-linked (GlcNAc...) asparagine" evidence="2">
    <location>
        <position position="143"/>
    </location>
</feature>
<feature type="disulfide bond" evidence="1">
    <location>
        <begin position="98"/>
        <end position="153"/>
    </location>
</feature>
<feature type="disulfide bond" evidence="1">
    <location>
        <begin position="116"/>
        <end position="168"/>
    </location>
</feature>
<feature type="disulfide bond" evidence="1">
    <location>
        <begin position="123"/>
        <end position="130"/>
    </location>
</feature>
<keyword id="KW-1015">Disulfide bond</keyword>
<keyword id="KW-0325">Glycoprotein</keyword>
<keyword id="KW-1185">Reference proteome</keyword>
<keyword id="KW-0964">Secreted</keyword>
<keyword id="KW-0732">Signal</keyword>
<accession>Q863K1</accession>
<proteinExistence type="inferred from homology"/>
<name>RNAS9_PANTR</name>